<organism>
    <name type="scientific">Streptococcus thermophilus (strain CNRZ 1066)</name>
    <dbReference type="NCBI Taxonomy" id="299768"/>
    <lineage>
        <taxon>Bacteria</taxon>
        <taxon>Bacillati</taxon>
        <taxon>Bacillota</taxon>
        <taxon>Bacilli</taxon>
        <taxon>Lactobacillales</taxon>
        <taxon>Streptococcaceae</taxon>
        <taxon>Streptococcus</taxon>
    </lineage>
</organism>
<gene>
    <name evidence="1" type="primary">rnhB</name>
    <name type="ordered locus">str0894</name>
</gene>
<accession>Q5M021</accession>
<dbReference type="EC" id="3.1.26.4" evidence="1"/>
<dbReference type="EMBL" id="CP000024">
    <property type="protein sequence ID" value="AAV62482.1"/>
    <property type="molecule type" value="Genomic_DNA"/>
</dbReference>
<dbReference type="SMR" id="Q5M021"/>
<dbReference type="KEGG" id="stc:str0894"/>
<dbReference type="HOGENOM" id="CLU_036532_2_1_9"/>
<dbReference type="GO" id="GO:0005737">
    <property type="term" value="C:cytoplasm"/>
    <property type="evidence" value="ECO:0007669"/>
    <property type="project" value="UniProtKB-SubCell"/>
</dbReference>
<dbReference type="GO" id="GO:0032299">
    <property type="term" value="C:ribonuclease H2 complex"/>
    <property type="evidence" value="ECO:0007669"/>
    <property type="project" value="TreeGrafter"/>
</dbReference>
<dbReference type="GO" id="GO:0030145">
    <property type="term" value="F:manganese ion binding"/>
    <property type="evidence" value="ECO:0007669"/>
    <property type="project" value="UniProtKB-UniRule"/>
</dbReference>
<dbReference type="GO" id="GO:0003723">
    <property type="term" value="F:RNA binding"/>
    <property type="evidence" value="ECO:0007669"/>
    <property type="project" value="InterPro"/>
</dbReference>
<dbReference type="GO" id="GO:0004523">
    <property type="term" value="F:RNA-DNA hybrid ribonuclease activity"/>
    <property type="evidence" value="ECO:0007669"/>
    <property type="project" value="UniProtKB-UniRule"/>
</dbReference>
<dbReference type="GO" id="GO:0043137">
    <property type="term" value="P:DNA replication, removal of RNA primer"/>
    <property type="evidence" value="ECO:0007669"/>
    <property type="project" value="TreeGrafter"/>
</dbReference>
<dbReference type="GO" id="GO:0006298">
    <property type="term" value="P:mismatch repair"/>
    <property type="evidence" value="ECO:0007669"/>
    <property type="project" value="TreeGrafter"/>
</dbReference>
<dbReference type="CDD" id="cd07182">
    <property type="entry name" value="RNase_HII_bacteria_HII_like"/>
    <property type="match status" value="1"/>
</dbReference>
<dbReference type="FunFam" id="3.30.420.10:FF:000006">
    <property type="entry name" value="Ribonuclease HII"/>
    <property type="match status" value="1"/>
</dbReference>
<dbReference type="Gene3D" id="3.30.420.10">
    <property type="entry name" value="Ribonuclease H-like superfamily/Ribonuclease H"/>
    <property type="match status" value="1"/>
</dbReference>
<dbReference type="HAMAP" id="MF_00052_B">
    <property type="entry name" value="RNase_HII_B"/>
    <property type="match status" value="1"/>
</dbReference>
<dbReference type="InterPro" id="IPR022898">
    <property type="entry name" value="RNase_HII"/>
</dbReference>
<dbReference type="InterPro" id="IPR001352">
    <property type="entry name" value="RNase_HII/HIII"/>
</dbReference>
<dbReference type="InterPro" id="IPR024567">
    <property type="entry name" value="RNase_HII/HIII_dom"/>
</dbReference>
<dbReference type="InterPro" id="IPR012337">
    <property type="entry name" value="RNaseH-like_sf"/>
</dbReference>
<dbReference type="InterPro" id="IPR036397">
    <property type="entry name" value="RNaseH_sf"/>
</dbReference>
<dbReference type="NCBIfam" id="NF000594">
    <property type="entry name" value="PRK00015.1-1"/>
    <property type="match status" value="1"/>
</dbReference>
<dbReference type="NCBIfam" id="NF000595">
    <property type="entry name" value="PRK00015.1-3"/>
    <property type="match status" value="1"/>
</dbReference>
<dbReference type="PANTHER" id="PTHR10954">
    <property type="entry name" value="RIBONUCLEASE H2 SUBUNIT A"/>
    <property type="match status" value="1"/>
</dbReference>
<dbReference type="PANTHER" id="PTHR10954:SF18">
    <property type="entry name" value="RIBONUCLEASE HII"/>
    <property type="match status" value="1"/>
</dbReference>
<dbReference type="Pfam" id="PF01351">
    <property type="entry name" value="RNase_HII"/>
    <property type="match status" value="1"/>
</dbReference>
<dbReference type="SUPFAM" id="SSF53098">
    <property type="entry name" value="Ribonuclease H-like"/>
    <property type="match status" value="1"/>
</dbReference>
<dbReference type="PROSITE" id="PS51975">
    <property type="entry name" value="RNASE_H_2"/>
    <property type="match status" value="1"/>
</dbReference>
<reference key="1">
    <citation type="journal article" date="2004" name="Nat. Biotechnol.">
        <title>Complete sequence and comparative genome analysis of the dairy bacterium Streptococcus thermophilus.</title>
        <authorList>
            <person name="Bolotin A."/>
            <person name="Quinquis B."/>
            <person name="Renault P."/>
            <person name="Sorokin A."/>
            <person name="Ehrlich S.D."/>
            <person name="Kulakauskas S."/>
            <person name="Lapidus A."/>
            <person name="Goltsman E."/>
            <person name="Mazur M."/>
            <person name="Pusch G.D."/>
            <person name="Fonstein M."/>
            <person name="Overbeek R."/>
            <person name="Kyprides N."/>
            <person name="Purnelle B."/>
            <person name="Prozzi D."/>
            <person name="Ngui K."/>
            <person name="Masuy D."/>
            <person name="Hancy F."/>
            <person name="Burteau S."/>
            <person name="Boutry M."/>
            <person name="Delcour J."/>
            <person name="Goffeau A."/>
            <person name="Hols P."/>
        </authorList>
    </citation>
    <scope>NUCLEOTIDE SEQUENCE [LARGE SCALE GENOMIC DNA]</scope>
    <source>
        <strain>CNRZ 1066</strain>
    </source>
</reference>
<evidence type="ECO:0000255" key="1">
    <source>
        <dbReference type="HAMAP-Rule" id="MF_00052"/>
    </source>
</evidence>
<evidence type="ECO:0000255" key="2">
    <source>
        <dbReference type="PROSITE-ProRule" id="PRU01319"/>
    </source>
</evidence>
<feature type="chain" id="PRO_0000235775" description="Ribonuclease HII">
    <location>
        <begin position="1"/>
        <end position="260"/>
    </location>
</feature>
<feature type="domain" description="RNase H type-2" evidence="2">
    <location>
        <begin position="75"/>
        <end position="260"/>
    </location>
</feature>
<feature type="binding site" evidence="1">
    <location>
        <position position="81"/>
    </location>
    <ligand>
        <name>a divalent metal cation</name>
        <dbReference type="ChEBI" id="CHEBI:60240"/>
    </ligand>
</feature>
<feature type="binding site" evidence="1">
    <location>
        <position position="82"/>
    </location>
    <ligand>
        <name>a divalent metal cation</name>
        <dbReference type="ChEBI" id="CHEBI:60240"/>
    </ligand>
</feature>
<feature type="binding site" evidence="1">
    <location>
        <position position="173"/>
    </location>
    <ligand>
        <name>a divalent metal cation</name>
        <dbReference type="ChEBI" id="CHEBI:60240"/>
    </ligand>
</feature>
<keyword id="KW-0963">Cytoplasm</keyword>
<keyword id="KW-0255">Endonuclease</keyword>
<keyword id="KW-0378">Hydrolase</keyword>
<keyword id="KW-0464">Manganese</keyword>
<keyword id="KW-0479">Metal-binding</keyword>
<keyword id="KW-0540">Nuclease</keyword>
<comment type="function">
    <text evidence="1">Endonuclease that specifically degrades the RNA of RNA-DNA hybrids.</text>
</comment>
<comment type="catalytic activity">
    <reaction evidence="1">
        <text>Endonucleolytic cleavage to 5'-phosphomonoester.</text>
        <dbReference type="EC" id="3.1.26.4"/>
    </reaction>
</comment>
<comment type="cofactor">
    <cofactor evidence="1">
        <name>Mn(2+)</name>
        <dbReference type="ChEBI" id="CHEBI:29035"/>
    </cofactor>
    <cofactor evidence="1">
        <name>Mg(2+)</name>
        <dbReference type="ChEBI" id="CHEBI:18420"/>
    </cofactor>
    <text evidence="1">Manganese or magnesium. Binds 1 divalent metal ion per monomer in the absence of substrate. May bind a second metal ion after substrate binding.</text>
</comment>
<comment type="subcellular location">
    <subcellularLocation>
        <location evidence="1">Cytoplasm</location>
    </subcellularLocation>
</comment>
<comment type="similarity">
    <text evidence="1">Belongs to the RNase HII family.</text>
</comment>
<proteinExistence type="inferred from homology"/>
<sequence>MGSILMATIKEVKEQLAILRDLDDPRWASFEEDSRTGVQAAIRKRRKAILAELAEEERLEILLNYEKSLYARGIELIAGVDEVGRGPLAGPVVAAAVILPKLCKIKGLNDSKKIPKSKHEAIYNQVMKEAVAVGIGIKDNYVIDDVNIYEATKLAMIEAIEKLNPQPEHLLIDAMNLDLPIEQTSIIKGDANSLSIAAASIVAKVTRDKMMADYEQEFPGYAFAKNAGYGTKEHLSGIDKFGVTPIHRRSFEPIKSIIKK</sequence>
<protein>
    <recommendedName>
        <fullName evidence="1">Ribonuclease HII</fullName>
        <shortName evidence="1">RNase HII</shortName>
        <ecNumber evidence="1">3.1.26.4</ecNumber>
    </recommendedName>
</protein>
<name>RNH2_STRT1</name>